<sequence length="63" mass="6417">MGSTSDKIAGKTNEVAGKVKKNVGEATGNNELRAKGAAQETKGKVQTSVGKAKDAVKGAVDRM</sequence>
<feature type="chain" id="PRO_0000209976" description="UPF0337 protein Atu0782">
    <location>
        <begin position="1"/>
        <end position="63"/>
    </location>
</feature>
<feature type="region of interest" description="Disordered" evidence="1">
    <location>
        <begin position="1"/>
        <end position="63"/>
    </location>
</feature>
<feature type="compositionally biased region" description="Basic and acidic residues" evidence="1">
    <location>
        <begin position="51"/>
        <end position="63"/>
    </location>
</feature>
<keyword id="KW-1185">Reference proteome</keyword>
<protein>
    <recommendedName>
        <fullName>UPF0337 protein Atu0782</fullName>
    </recommendedName>
</protein>
<accession>Q8UHA1</accession>
<accession>Q7D0P4</accession>
<comment type="similarity">
    <text evidence="2">Belongs to the UPF0337 (CsbD) family.</text>
</comment>
<organism>
    <name type="scientific">Agrobacterium fabrum (strain C58 / ATCC 33970)</name>
    <name type="common">Agrobacterium tumefaciens (strain C58)</name>
    <dbReference type="NCBI Taxonomy" id="176299"/>
    <lineage>
        <taxon>Bacteria</taxon>
        <taxon>Pseudomonadati</taxon>
        <taxon>Pseudomonadota</taxon>
        <taxon>Alphaproteobacteria</taxon>
        <taxon>Hyphomicrobiales</taxon>
        <taxon>Rhizobiaceae</taxon>
        <taxon>Rhizobium/Agrobacterium group</taxon>
        <taxon>Agrobacterium</taxon>
        <taxon>Agrobacterium tumefaciens complex</taxon>
    </lineage>
</organism>
<evidence type="ECO:0000256" key="1">
    <source>
        <dbReference type="SAM" id="MobiDB-lite"/>
    </source>
</evidence>
<evidence type="ECO:0000305" key="2"/>
<dbReference type="EMBL" id="AE007869">
    <property type="protein sequence ID" value="AAK86591.1"/>
    <property type="molecule type" value="Genomic_DNA"/>
</dbReference>
<dbReference type="PIR" id="AH2672">
    <property type="entry name" value="AH2672"/>
</dbReference>
<dbReference type="PIR" id="F97454">
    <property type="entry name" value="F97454"/>
</dbReference>
<dbReference type="RefSeq" id="NP_353806.1">
    <property type="nucleotide sequence ID" value="NC_003062.2"/>
</dbReference>
<dbReference type="RefSeq" id="WP_006309833.1">
    <property type="nucleotide sequence ID" value="NC_003062.2"/>
</dbReference>
<dbReference type="SMR" id="Q8UHA1"/>
<dbReference type="STRING" id="176299.Atu0782"/>
<dbReference type="EnsemblBacteria" id="AAK86591">
    <property type="protein sequence ID" value="AAK86591"/>
    <property type="gene ID" value="Atu0782"/>
</dbReference>
<dbReference type="GeneID" id="1132820"/>
<dbReference type="KEGG" id="atu:Atu0782"/>
<dbReference type="PATRIC" id="fig|176299.10.peg.782"/>
<dbReference type="eggNOG" id="COG3237">
    <property type="taxonomic scope" value="Bacteria"/>
</dbReference>
<dbReference type="HOGENOM" id="CLU_135567_3_2_5"/>
<dbReference type="OrthoDB" id="7226109at2"/>
<dbReference type="PhylomeDB" id="Q8UHA1"/>
<dbReference type="BioCyc" id="AGRO:ATU0782-MONOMER"/>
<dbReference type="Proteomes" id="UP000000813">
    <property type="component" value="Chromosome circular"/>
</dbReference>
<dbReference type="Gene3D" id="1.10.1470.10">
    <property type="entry name" value="YjbJ"/>
    <property type="match status" value="1"/>
</dbReference>
<dbReference type="InterPro" id="IPR008462">
    <property type="entry name" value="CsbD"/>
</dbReference>
<dbReference type="InterPro" id="IPR036629">
    <property type="entry name" value="YjbJ_sf"/>
</dbReference>
<dbReference type="Pfam" id="PF05532">
    <property type="entry name" value="CsbD"/>
    <property type="match status" value="1"/>
</dbReference>
<dbReference type="SUPFAM" id="SSF69047">
    <property type="entry name" value="Hypothetical protein YjbJ"/>
    <property type="match status" value="1"/>
</dbReference>
<reference key="1">
    <citation type="journal article" date="2001" name="Science">
        <title>The genome of the natural genetic engineer Agrobacterium tumefaciens C58.</title>
        <authorList>
            <person name="Wood D.W."/>
            <person name="Setubal J.C."/>
            <person name="Kaul R."/>
            <person name="Monks D.E."/>
            <person name="Kitajima J.P."/>
            <person name="Okura V.K."/>
            <person name="Zhou Y."/>
            <person name="Chen L."/>
            <person name="Wood G.E."/>
            <person name="Almeida N.F. Jr."/>
            <person name="Woo L."/>
            <person name="Chen Y."/>
            <person name="Paulsen I.T."/>
            <person name="Eisen J.A."/>
            <person name="Karp P.D."/>
            <person name="Bovee D. Sr."/>
            <person name="Chapman P."/>
            <person name="Clendenning J."/>
            <person name="Deatherage G."/>
            <person name="Gillet W."/>
            <person name="Grant C."/>
            <person name="Kutyavin T."/>
            <person name="Levy R."/>
            <person name="Li M.-J."/>
            <person name="McClelland E."/>
            <person name="Palmieri A."/>
            <person name="Raymond C."/>
            <person name="Rouse G."/>
            <person name="Saenphimmachak C."/>
            <person name="Wu Z."/>
            <person name="Romero P."/>
            <person name="Gordon D."/>
            <person name="Zhang S."/>
            <person name="Yoo H."/>
            <person name="Tao Y."/>
            <person name="Biddle P."/>
            <person name="Jung M."/>
            <person name="Krespan W."/>
            <person name="Perry M."/>
            <person name="Gordon-Kamm B."/>
            <person name="Liao L."/>
            <person name="Kim S."/>
            <person name="Hendrick C."/>
            <person name="Zhao Z.-Y."/>
            <person name="Dolan M."/>
            <person name="Chumley F."/>
            <person name="Tingey S.V."/>
            <person name="Tomb J.-F."/>
            <person name="Gordon M.P."/>
            <person name="Olson M.V."/>
            <person name="Nester E.W."/>
        </authorList>
    </citation>
    <scope>NUCLEOTIDE SEQUENCE [LARGE SCALE GENOMIC DNA]</scope>
    <source>
        <strain>C58 / ATCC 33970</strain>
    </source>
</reference>
<reference key="2">
    <citation type="journal article" date="2001" name="Science">
        <title>Genome sequence of the plant pathogen and biotechnology agent Agrobacterium tumefaciens C58.</title>
        <authorList>
            <person name="Goodner B."/>
            <person name="Hinkle G."/>
            <person name="Gattung S."/>
            <person name="Miller N."/>
            <person name="Blanchard M."/>
            <person name="Qurollo B."/>
            <person name="Goldman B.S."/>
            <person name="Cao Y."/>
            <person name="Askenazi M."/>
            <person name="Halling C."/>
            <person name="Mullin L."/>
            <person name="Houmiel K."/>
            <person name="Gordon J."/>
            <person name="Vaudin M."/>
            <person name="Iartchouk O."/>
            <person name="Epp A."/>
            <person name="Liu F."/>
            <person name="Wollam C."/>
            <person name="Allinger M."/>
            <person name="Doughty D."/>
            <person name="Scott C."/>
            <person name="Lappas C."/>
            <person name="Markelz B."/>
            <person name="Flanagan C."/>
            <person name="Crowell C."/>
            <person name="Gurson J."/>
            <person name="Lomo C."/>
            <person name="Sear C."/>
            <person name="Strub G."/>
            <person name="Cielo C."/>
            <person name="Slater S."/>
        </authorList>
    </citation>
    <scope>NUCLEOTIDE SEQUENCE [LARGE SCALE GENOMIC DNA]</scope>
    <source>
        <strain>C58 / ATCC 33970</strain>
    </source>
</reference>
<proteinExistence type="inferred from homology"/>
<gene>
    <name type="ordered locus">Atu0782</name>
    <name type="ORF">AGR_C_1429</name>
</gene>
<name>Y782_AGRFC</name>